<sequence>MESTRMTRTLAAMQLMDSALPTGAFSHSHGFETYLHRGVIHDASSFGVWLQMFIQQQLTFTDAVVIREVFRSTSLKRVGELDQLITAQAVPEQIRTAGKTMGIRMLEIAEQGYPDPALIWYRREVDQRTLSGHPAIVWALVARALDVAEDEAVAQHLYATSMSLIHNAVRAVPFGQNAGQHLIRQAQEWVTAAVGNSADIEFDDIGSITPGLEIAQMQHENQRARMFMS</sequence>
<name>UREF_COREF</name>
<protein>
    <recommendedName>
        <fullName evidence="1">Urease accessory protein UreF</fullName>
    </recommendedName>
</protein>
<gene>
    <name evidence="1" type="primary">ureF</name>
    <name type="ordered locus">CE0997</name>
</gene>
<accession>Q8FQX0</accession>
<dbReference type="EMBL" id="BA000035">
    <property type="protein sequence ID" value="BAC17807.1"/>
    <property type="molecule type" value="Genomic_DNA"/>
</dbReference>
<dbReference type="RefSeq" id="WP_006770038.1">
    <property type="nucleotide sequence ID" value="NC_004369.1"/>
</dbReference>
<dbReference type="SMR" id="Q8FQX0"/>
<dbReference type="STRING" id="196164.gene:10741403"/>
<dbReference type="KEGG" id="cef:CE0997"/>
<dbReference type="eggNOG" id="COG0830">
    <property type="taxonomic scope" value="Bacteria"/>
</dbReference>
<dbReference type="HOGENOM" id="CLU_049215_4_2_11"/>
<dbReference type="OrthoDB" id="9798772at2"/>
<dbReference type="Proteomes" id="UP000001409">
    <property type="component" value="Chromosome"/>
</dbReference>
<dbReference type="GO" id="GO:0005737">
    <property type="term" value="C:cytoplasm"/>
    <property type="evidence" value="ECO:0007669"/>
    <property type="project" value="UniProtKB-SubCell"/>
</dbReference>
<dbReference type="GO" id="GO:0016151">
    <property type="term" value="F:nickel cation binding"/>
    <property type="evidence" value="ECO:0007669"/>
    <property type="project" value="UniProtKB-UniRule"/>
</dbReference>
<dbReference type="Gene3D" id="1.10.4190.10">
    <property type="entry name" value="Urease accessory protein UreF"/>
    <property type="match status" value="1"/>
</dbReference>
<dbReference type="HAMAP" id="MF_01385">
    <property type="entry name" value="UreF"/>
    <property type="match status" value="1"/>
</dbReference>
<dbReference type="InterPro" id="IPR002639">
    <property type="entry name" value="UreF"/>
</dbReference>
<dbReference type="InterPro" id="IPR038277">
    <property type="entry name" value="UreF_sf"/>
</dbReference>
<dbReference type="PANTHER" id="PTHR33620">
    <property type="entry name" value="UREASE ACCESSORY PROTEIN F"/>
    <property type="match status" value="1"/>
</dbReference>
<dbReference type="PANTHER" id="PTHR33620:SF1">
    <property type="entry name" value="UREASE ACCESSORY PROTEIN F"/>
    <property type="match status" value="1"/>
</dbReference>
<dbReference type="Pfam" id="PF01730">
    <property type="entry name" value="UreF"/>
    <property type="match status" value="1"/>
</dbReference>
<dbReference type="PIRSF" id="PIRSF009467">
    <property type="entry name" value="Ureas_acces_UreF"/>
    <property type="match status" value="1"/>
</dbReference>
<reference key="1">
    <citation type="journal article" date="2003" name="Genome Res.">
        <title>Comparative complete genome sequence analysis of the amino acid replacements responsible for the thermostability of Corynebacterium efficiens.</title>
        <authorList>
            <person name="Nishio Y."/>
            <person name="Nakamura Y."/>
            <person name="Kawarabayasi Y."/>
            <person name="Usuda Y."/>
            <person name="Kimura E."/>
            <person name="Sugimoto S."/>
            <person name="Matsui K."/>
            <person name="Yamagishi A."/>
            <person name="Kikuchi H."/>
            <person name="Ikeo K."/>
            <person name="Gojobori T."/>
        </authorList>
    </citation>
    <scope>NUCLEOTIDE SEQUENCE [LARGE SCALE GENOMIC DNA]</scope>
    <source>
        <strain>DSM 44549 / YS-314 / AJ 12310 / JCM 11189 / NBRC 100395</strain>
    </source>
</reference>
<organism>
    <name type="scientific">Corynebacterium efficiens (strain DSM 44549 / YS-314 / AJ 12310 / JCM 11189 / NBRC 100395)</name>
    <dbReference type="NCBI Taxonomy" id="196164"/>
    <lineage>
        <taxon>Bacteria</taxon>
        <taxon>Bacillati</taxon>
        <taxon>Actinomycetota</taxon>
        <taxon>Actinomycetes</taxon>
        <taxon>Mycobacteriales</taxon>
        <taxon>Corynebacteriaceae</taxon>
        <taxon>Corynebacterium</taxon>
    </lineage>
</organism>
<evidence type="ECO:0000255" key="1">
    <source>
        <dbReference type="HAMAP-Rule" id="MF_01385"/>
    </source>
</evidence>
<feature type="chain" id="PRO_0000344115" description="Urease accessory protein UreF">
    <location>
        <begin position="1"/>
        <end position="229"/>
    </location>
</feature>
<comment type="function">
    <text evidence="1">Required for maturation of urease via the functional incorporation of the urease nickel metallocenter.</text>
</comment>
<comment type="subunit">
    <text evidence="1">UreD, UreF and UreG form a complex that acts as a GTP-hydrolysis-dependent molecular chaperone, activating the urease apoprotein by helping to assemble the nickel containing metallocenter of UreC. The UreE protein probably delivers the nickel.</text>
</comment>
<comment type="subcellular location">
    <subcellularLocation>
        <location evidence="1">Cytoplasm</location>
    </subcellularLocation>
</comment>
<comment type="similarity">
    <text evidence="1">Belongs to the UreF family.</text>
</comment>
<proteinExistence type="inferred from homology"/>
<keyword id="KW-0143">Chaperone</keyword>
<keyword id="KW-0963">Cytoplasm</keyword>
<keyword id="KW-0996">Nickel insertion</keyword>
<keyword id="KW-1185">Reference proteome</keyword>